<protein>
    <recommendedName>
        <fullName>Transmembrane protein 248</fullName>
    </recommendedName>
</protein>
<proteinExistence type="evidence at transcript level"/>
<name>TM248_MOUSE</name>
<accession>Q3TBN1</accession>
<accession>Q8CIB2</accession>
<accession>Q9DD07</accession>
<keyword id="KW-0472">Membrane</keyword>
<keyword id="KW-1185">Reference proteome</keyword>
<keyword id="KW-0812">Transmembrane</keyword>
<keyword id="KW-1133">Transmembrane helix</keyword>
<organism>
    <name type="scientific">Mus musculus</name>
    <name type="common">Mouse</name>
    <dbReference type="NCBI Taxonomy" id="10090"/>
    <lineage>
        <taxon>Eukaryota</taxon>
        <taxon>Metazoa</taxon>
        <taxon>Chordata</taxon>
        <taxon>Craniata</taxon>
        <taxon>Vertebrata</taxon>
        <taxon>Euteleostomi</taxon>
        <taxon>Mammalia</taxon>
        <taxon>Eutheria</taxon>
        <taxon>Euarchontoglires</taxon>
        <taxon>Glires</taxon>
        <taxon>Rodentia</taxon>
        <taxon>Myomorpha</taxon>
        <taxon>Muroidea</taxon>
        <taxon>Muridae</taxon>
        <taxon>Murinae</taxon>
        <taxon>Mus</taxon>
        <taxon>Mus</taxon>
    </lineage>
</organism>
<sequence>MFSINPLENLKLYISSRPPLVVFMISVSAMAIAFLTLGYFFKIKEIKSPEMAEDWNTFLLRFNDLDLCVSENETLKHLSNDTTTPESTMTVGQARSSTQPPQSLEESGPINISVAITLTLDPLKPFGGYSRNVTHLYSTILGHQIGLSGREAHEEINITFTLPAAWNADDCALHGHCEQAVFTACMTLTAAPGVFPVTVQPPHCIPDTYSNATLWYKIFTTARDANTKYAQDYNPFWCYKGAIGKVYHALNPKLTVVVPDDDRSLINLHLMHTSYFLFVMVITMFCYAVIKGRPSKLRQSNPEFCPEKVALADA</sequence>
<gene>
    <name type="primary">Tmem248</name>
</gene>
<reference key="1">
    <citation type="journal article" date="2005" name="Science">
        <title>The transcriptional landscape of the mammalian genome.</title>
        <authorList>
            <person name="Carninci P."/>
            <person name="Kasukawa T."/>
            <person name="Katayama S."/>
            <person name="Gough J."/>
            <person name="Frith M.C."/>
            <person name="Maeda N."/>
            <person name="Oyama R."/>
            <person name="Ravasi T."/>
            <person name="Lenhard B."/>
            <person name="Wells C."/>
            <person name="Kodzius R."/>
            <person name="Shimokawa K."/>
            <person name="Bajic V.B."/>
            <person name="Brenner S.E."/>
            <person name="Batalov S."/>
            <person name="Forrest A.R."/>
            <person name="Zavolan M."/>
            <person name="Davis M.J."/>
            <person name="Wilming L.G."/>
            <person name="Aidinis V."/>
            <person name="Allen J.E."/>
            <person name="Ambesi-Impiombato A."/>
            <person name="Apweiler R."/>
            <person name="Aturaliya R.N."/>
            <person name="Bailey T.L."/>
            <person name="Bansal M."/>
            <person name="Baxter L."/>
            <person name="Beisel K.W."/>
            <person name="Bersano T."/>
            <person name="Bono H."/>
            <person name="Chalk A.M."/>
            <person name="Chiu K.P."/>
            <person name="Choudhary V."/>
            <person name="Christoffels A."/>
            <person name="Clutterbuck D.R."/>
            <person name="Crowe M.L."/>
            <person name="Dalla E."/>
            <person name="Dalrymple B.P."/>
            <person name="de Bono B."/>
            <person name="Della Gatta G."/>
            <person name="di Bernardo D."/>
            <person name="Down T."/>
            <person name="Engstrom P."/>
            <person name="Fagiolini M."/>
            <person name="Faulkner G."/>
            <person name="Fletcher C.F."/>
            <person name="Fukushima T."/>
            <person name="Furuno M."/>
            <person name="Futaki S."/>
            <person name="Gariboldi M."/>
            <person name="Georgii-Hemming P."/>
            <person name="Gingeras T.R."/>
            <person name="Gojobori T."/>
            <person name="Green R.E."/>
            <person name="Gustincich S."/>
            <person name="Harbers M."/>
            <person name="Hayashi Y."/>
            <person name="Hensch T.K."/>
            <person name="Hirokawa N."/>
            <person name="Hill D."/>
            <person name="Huminiecki L."/>
            <person name="Iacono M."/>
            <person name="Ikeo K."/>
            <person name="Iwama A."/>
            <person name="Ishikawa T."/>
            <person name="Jakt M."/>
            <person name="Kanapin A."/>
            <person name="Katoh M."/>
            <person name="Kawasawa Y."/>
            <person name="Kelso J."/>
            <person name="Kitamura H."/>
            <person name="Kitano H."/>
            <person name="Kollias G."/>
            <person name="Krishnan S.P."/>
            <person name="Kruger A."/>
            <person name="Kummerfeld S.K."/>
            <person name="Kurochkin I.V."/>
            <person name="Lareau L.F."/>
            <person name="Lazarevic D."/>
            <person name="Lipovich L."/>
            <person name="Liu J."/>
            <person name="Liuni S."/>
            <person name="McWilliam S."/>
            <person name="Madan Babu M."/>
            <person name="Madera M."/>
            <person name="Marchionni L."/>
            <person name="Matsuda H."/>
            <person name="Matsuzawa S."/>
            <person name="Miki H."/>
            <person name="Mignone F."/>
            <person name="Miyake S."/>
            <person name="Morris K."/>
            <person name="Mottagui-Tabar S."/>
            <person name="Mulder N."/>
            <person name="Nakano N."/>
            <person name="Nakauchi H."/>
            <person name="Ng P."/>
            <person name="Nilsson R."/>
            <person name="Nishiguchi S."/>
            <person name="Nishikawa S."/>
            <person name="Nori F."/>
            <person name="Ohara O."/>
            <person name="Okazaki Y."/>
            <person name="Orlando V."/>
            <person name="Pang K.C."/>
            <person name="Pavan W.J."/>
            <person name="Pavesi G."/>
            <person name="Pesole G."/>
            <person name="Petrovsky N."/>
            <person name="Piazza S."/>
            <person name="Reed J."/>
            <person name="Reid J.F."/>
            <person name="Ring B.Z."/>
            <person name="Ringwald M."/>
            <person name="Rost B."/>
            <person name="Ruan Y."/>
            <person name="Salzberg S.L."/>
            <person name="Sandelin A."/>
            <person name="Schneider C."/>
            <person name="Schoenbach C."/>
            <person name="Sekiguchi K."/>
            <person name="Semple C.A."/>
            <person name="Seno S."/>
            <person name="Sessa L."/>
            <person name="Sheng Y."/>
            <person name="Shibata Y."/>
            <person name="Shimada H."/>
            <person name="Shimada K."/>
            <person name="Silva D."/>
            <person name="Sinclair B."/>
            <person name="Sperling S."/>
            <person name="Stupka E."/>
            <person name="Sugiura K."/>
            <person name="Sultana R."/>
            <person name="Takenaka Y."/>
            <person name="Taki K."/>
            <person name="Tammoja K."/>
            <person name="Tan S.L."/>
            <person name="Tang S."/>
            <person name="Taylor M.S."/>
            <person name="Tegner J."/>
            <person name="Teichmann S.A."/>
            <person name="Ueda H.R."/>
            <person name="van Nimwegen E."/>
            <person name="Verardo R."/>
            <person name="Wei C.L."/>
            <person name="Yagi K."/>
            <person name="Yamanishi H."/>
            <person name="Zabarovsky E."/>
            <person name="Zhu S."/>
            <person name="Zimmer A."/>
            <person name="Hide W."/>
            <person name="Bult C."/>
            <person name="Grimmond S.M."/>
            <person name="Teasdale R.D."/>
            <person name="Liu E.T."/>
            <person name="Brusic V."/>
            <person name="Quackenbush J."/>
            <person name="Wahlestedt C."/>
            <person name="Mattick J.S."/>
            <person name="Hume D.A."/>
            <person name="Kai C."/>
            <person name="Sasaki D."/>
            <person name="Tomaru Y."/>
            <person name="Fukuda S."/>
            <person name="Kanamori-Katayama M."/>
            <person name="Suzuki M."/>
            <person name="Aoki J."/>
            <person name="Arakawa T."/>
            <person name="Iida J."/>
            <person name="Imamura K."/>
            <person name="Itoh M."/>
            <person name="Kato T."/>
            <person name="Kawaji H."/>
            <person name="Kawagashira N."/>
            <person name="Kawashima T."/>
            <person name="Kojima M."/>
            <person name="Kondo S."/>
            <person name="Konno H."/>
            <person name="Nakano K."/>
            <person name="Ninomiya N."/>
            <person name="Nishio T."/>
            <person name="Okada M."/>
            <person name="Plessy C."/>
            <person name="Shibata K."/>
            <person name="Shiraki T."/>
            <person name="Suzuki S."/>
            <person name="Tagami M."/>
            <person name="Waki K."/>
            <person name="Watahiki A."/>
            <person name="Okamura-Oho Y."/>
            <person name="Suzuki H."/>
            <person name="Kawai J."/>
            <person name="Hayashizaki Y."/>
        </authorList>
    </citation>
    <scope>NUCLEOTIDE SEQUENCE [LARGE SCALE MRNA]</scope>
    <source>
        <strain>C57BL/6J</strain>
        <strain>NOD</strain>
        <tissue>Dendritic cell</tissue>
        <tissue>Heart</tissue>
        <tissue>Kidney</tissue>
    </source>
</reference>
<reference key="2">
    <citation type="journal article" date="2004" name="Genome Res.">
        <title>The status, quality, and expansion of the NIH full-length cDNA project: the Mammalian Gene Collection (MGC).</title>
        <authorList>
            <consortium name="The MGC Project Team"/>
        </authorList>
    </citation>
    <scope>NUCLEOTIDE SEQUENCE [LARGE SCALE MRNA]</scope>
    <source>
        <strain>Czech II</strain>
        <tissue>Mammary tumor</tissue>
    </source>
</reference>
<feature type="chain" id="PRO_0000295127" description="Transmembrane protein 248">
    <location>
        <begin position="1"/>
        <end position="314"/>
    </location>
</feature>
<feature type="transmembrane region" description="Helical" evidence="1">
    <location>
        <begin position="21"/>
        <end position="41"/>
    </location>
</feature>
<feature type="transmembrane region" description="Helical" evidence="1">
    <location>
        <begin position="179"/>
        <end position="199"/>
    </location>
</feature>
<feature type="transmembrane region" description="Helical" evidence="1">
    <location>
        <begin position="236"/>
        <end position="258"/>
    </location>
</feature>
<feature type="transmembrane region" description="Helical" evidence="1">
    <location>
        <begin position="270"/>
        <end position="290"/>
    </location>
</feature>
<feature type="region of interest" description="Disordered" evidence="2">
    <location>
        <begin position="78"/>
        <end position="106"/>
    </location>
</feature>
<feature type="compositionally biased region" description="Polar residues" evidence="2">
    <location>
        <begin position="80"/>
        <end position="105"/>
    </location>
</feature>
<feature type="sequence conflict" description="In Ref. 2; AAH33455." evidence="3" ref="2">
    <original>N</original>
    <variation>D</variation>
    <location>
        <position position="63"/>
    </location>
</feature>
<comment type="subcellular location">
    <subcellularLocation>
        <location evidence="3">Membrane</location>
        <topology evidence="3">Multi-pass membrane protein</topology>
    </subcellularLocation>
</comment>
<comment type="similarity">
    <text evidence="3">Belongs to the TMEM248 family.</text>
</comment>
<comment type="sequence caution" evidence="3">
    <conflict type="frameshift">
        <sequence resource="EMBL-CDS" id="BAB21996"/>
    </conflict>
</comment>
<evidence type="ECO:0000255" key="1"/>
<evidence type="ECO:0000256" key="2">
    <source>
        <dbReference type="SAM" id="MobiDB-lite"/>
    </source>
</evidence>
<evidence type="ECO:0000305" key="3"/>
<dbReference type="EMBL" id="AK002297">
    <property type="protein sequence ID" value="BAB21996.1"/>
    <property type="status" value="ALT_FRAME"/>
    <property type="molecule type" value="mRNA"/>
</dbReference>
<dbReference type="EMBL" id="AK142176">
    <property type="protein sequence ID" value="BAE24962.1"/>
    <property type="molecule type" value="mRNA"/>
</dbReference>
<dbReference type="EMBL" id="AK171152">
    <property type="protein sequence ID" value="BAE42278.1"/>
    <property type="molecule type" value="mRNA"/>
</dbReference>
<dbReference type="EMBL" id="BC033455">
    <property type="protein sequence ID" value="AAH33455.1"/>
    <property type="molecule type" value="mRNA"/>
</dbReference>
<dbReference type="CCDS" id="CCDS39295.1"/>
<dbReference type="RefSeq" id="NP_001074863.1">
    <property type="nucleotide sequence ID" value="NM_001081394.1"/>
</dbReference>
<dbReference type="RefSeq" id="NP_082130.1">
    <property type="nucleotide sequence ID" value="NM_027854.1"/>
</dbReference>
<dbReference type="RefSeq" id="XP_011239209.1">
    <property type="nucleotide sequence ID" value="XM_011240907.4"/>
</dbReference>
<dbReference type="RefSeq" id="XP_030110670.1">
    <property type="nucleotide sequence ID" value="XM_030254810.1"/>
</dbReference>
<dbReference type="RefSeq" id="XP_030110671.1">
    <property type="nucleotide sequence ID" value="XM_030254811.2"/>
</dbReference>
<dbReference type="FunCoup" id="Q3TBN1">
    <property type="interactions" value="173"/>
</dbReference>
<dbReference type="STRING" id="10090.ENSMUSP00000067501"/>
<dbReference type="GlyGen" id="Q3TBN1">
    <property type="glycosylation" value="3 sites, 3 N-linked glycans (3 sites)"/>
</dbReference>
<dbReference type="iPTMnet" id="Q3TBN1"/>
<dbReference type="PhosphoSitePlus" id="Q3TBN1"/>
<dbReference type="PaxDb" id="10090-ENSMUSP00000106929"/>
<dbReference type="PeptideAtlas" id="Q3TBN1"/>
<dbReference type="ProteomicsDB" id="262827"/>
<dbReference type="Antibodypedia" id="3083">
    <property type="antibodies" value="67 antibodies from 16 providers"/>
</dbReference>
<dbReference type="Ensembl" id="ENSMUST00000065329.13">
    <property type="protein sequence ID" value="ENSMUSP00000067501.7"/>
    <property type="gene ID" value="ENSMUSG00000053094.16"/>
</dbReference>
<dbReference type="Ensembl" id="ENSMUST00000111298.6">
    <property type="protein sequence ID" value="ENSMUSP00000106929.5"/>
    <property type="gene ID" value="ENSMUSG00000053094.16"/>
</dbReference>
<dbReference type="GeneID" id="71667"/>
<dbReference type="KEGG" id="mmu:71667"/>
<dbReference type="UCSC" id="uc008zuh.1">
    <property type="organism name" value="mouse"/>
</dbReference>
<dbReference type="AGR" id="MGI:1918917"/>
<dbReference type="CTD" id="55069"/>
<dbReference type="MGI" id="MGI:1918917">
    <property type="gene designation" value="Tmem248"/>
</dbReference>
<dbReference type="VEuPathDB" id="HostDB:ENSMUSG00000053094"/>
<dbReference type="eggNOG" id="ENOG502R6D8">
    <property type="taxonomic scope" value="Eukaryota"/>
</dbReference>
<dbReference type="GeneTree" id="ENSGT00940000153883"/>
<dbReference type="HOGENOM" id="CLU_080742_0_0_1"/>
<dbReference type="InParanoid" id="Q3TBN1"/>
<dbReference type="OMA" id="TLFCYAI"/>
<dbReference type="OrthoDB" id="6329605at2759"/>
<dbReference type="PhylomeDB" id="Q3TBN1"/>
<dbReference type="TreeFam" id="TF331542"/>
<dbReference type="BioGRID-ORCS" id="71667">
    <property type="hits" value="2 hits in 78 CRISPR screens"/>
</dbReference>
<dbReference type="ChiTaRS" id="Tmem248">
    <property type="organism name" value="mouse"/>
</dbReference>
<dbReference type="PRO" id="PR:Q3TBN1"/>
<dbReference type="Proteomes" id="UP000000589">
    <property type="component" value="Chromosome 5"/>
</dbReference>
<dbReference type="RNAct" id="Q3TBN1">
    <property type="molecule type" value="protein"/>
</dbReference>
<dbReference type="Bgee" id="ENSMUSG00000053094">
    <property type="expression patterns" value="Expressed in lacrimal gland and 226 other cell types or tissues"/>
</dbReference>
<dbReference type="ExpressionAtlas" id="Q3TBN1">
    <property type="expression patterns" value="baseline and differential"/>
</dbReference>
<dbReference type="GO" id="GO:0016020">
    <property type="term" value="C:membrane"/>
    <property type="evidence" value="ECO:0007669"/>
    <property type="project" value="UniProtKB-SubCell"/>
</dbReference>
<dbReference type="InterPro" id="IPR039493">
    <property type="entry name" value="TMEM248/TMEM219"/>
</dbReference>
<dbReference type="InterPro" id="IPR039587">
    <property type="entry name" value="TMEM248/TMEM219_dom"/>
</dbReference>
<dbReference type="PANTHER" id="PTHR16002:SF5">
    <property type="entry name" value="TRANSMEMBRANE PROTEIN 248"/>
    <property type="match status" value="1"/>
</dbReference>
<dbReference type="PANTHER" id="PTHR16002">
    <property type="entry name" value="TRANSMEMBRANE PROTEIN 248-LIKE"/>
    <property type="match status" value="1"/>
</dbReference>
<dbReference type="Pfam" id="PF14940">
    <property type="entry name" value="TMEM219"/>
    <property type="match status" value="1"/>
</dbReference>